<proteinExistence type="evidence at transcript level"/>
<sequence>MAQYKGAASEAGRAMQLMKKREKQREQLEQMKLKIAEENVVKANINKKFSAHYDAVEAELKSSTVGLVTLNDMKAKQEALVKEREKQLAKKEQFKDLQLKLEKQRERERKKEQKRKIASLSFNLEEDEECEDEESEEEEEEYVADKEDLPKKKKKKKQQLGKNPDVDTSFLPDRDREEEENRLREELRQEWERKQEKIKSEEIEITFSYWDGSGHRRTVKMKKGNSIQQFLQKALEILRKDFSELRSAGVEQLMYIKEDLIIPHHHSFYDFIVTKARGKSGPLFNFDVHEDVRLLSDASVEKDESHAGKVVLRSWYEKNKHIFPASRWEPYDPEKKWDKYTIR</sequence>
<name>F50AB_XENLA</name>
<accession>Q4KLV7</accession>
<dbReference type="EMBL" id="BC098980">
    <property type="protein sequence ID" value="AAH98980.1"/>
    <property type="molecule type" value="mRNA"/>
</dbReference>
<dbReference type="RefSeq" id="NP_001089573.1">
    <property type="nucleotide sequence ID" value="NM_001096104.1"/>
</dbReference>
<dbReference type="SMR" id="Q4KLV7"/>
<dbReference type="DNASU" id="734629"/>
<dbReference type="GeneID" id="734629"/>
<dbReference type="KEGG" id="xla:734629"/>
<dbReference type="AGR" id="Xenbase:XB-GENE-6255587"/>
<dbReference type="CTD" id="734629"/>
<dbReference type="OrthoDB" id="1562195at2759"/>
<dbReference type="Proteomes" id="UP000186698">
    <property type="component" value="Chromosome 8S"/>
</dbReference>
<dbReference type="Bgee" id="734629">
    <property type="expression patterns" value="Expressed in gastrula and 19 other cell types or tissues"/>
</dbReference>
<dbReference type="GO" id="GO:0005634">
    <property type="term" value="C:nucleus"/>
    <property type="evidence" value="ECO:0000318"/>
    <property type="project" value="GO_Central"/>
</dbReference>
<dbReference type="GO" id="GO:0006325">
    <property type="term" value="P:chromatin organization"/>
    <property type="evidence" value="ECO:0000318"/>
    <property type="project" value="GO_Central"/>
</dbReference>
<dbReference type="GO" id="GO:0006397">
    <property type="term" value="P:mRNA processing"/>
    <property type="evidence" value="ECO:0007669"/>
    <property type="project" value="UniProtKB-KW"/>
</dbReference>
<dbReference type="GO" id="GO:0008380">
    <property type="term" value="P:RNA splicing"/>
    <property type="evidence" value="ECO:0007669"/>
    <property type="project" value="UniProtKB-KW"/>
</dbReference>
<dbReference type="InterPro" id="IPR048337">
    <property type="entry name" value="FAM50A/XAP5_C"/>
</dbReference>
<dbReference type="InterPro" id="IPR007005">
    <property type="entry name" value="XAP5"/>
</dbReference>
<dbReference type="PANTHER" id="PTHR12722:SF0">
    <property type="entry name" value="PROTEIN FAM50A"/>
    <property type="match status" value="1"/>
</dbReference>
<dbReference type="PANTHER" id="PTHR12722">
    <property type="entry name" value="XAP-5 PROTEIN-RELATED"/>
    <property type="match status" value="1"/>
</dbReference>
<dbReference type="Pfam" id="PF04921">
    <property type="entry name" value="XAP5"/>
    <property type="match status" value="1"/>
</dbReference>
<gene>
    <name type="primary">fam50a-b</name>
    <name type="synonym">fam50-b</name>
</gene>
<reference key="1">
    <citation type="submission" date="2005-07" db="EMBL/GenBank/DDBJ databases">
        <authorList>
            <consortium name="NIH - Xenopus Gene Collection (XGC) project"/>
        </authorList>
    </citation>
    <scope>NUCLEOTIDE SEQUENCE [LARGE SCALE MRNA]</scope>
    <source>
        <tissue>Ovary</tissue>
    </source>
</reference>
<organism>
    <name type="scientific">Xenopus laevis</name>
    <name type="common">African clawed frog</name>
    <dbReference type="NCBI Taxonomy" id="8355"/>
    <lineage>
        <taxon>Eukaryota</taxon>
        <taxon>Metazoa</taxon>
        <taxon>Chordata</taxon>
        <taxon>Craniata</taxon>
        <taxon>Vertebrata</taxon>
        <taxon>Euteleostomi</taxon>
        <taxon>Amphibia</taxon>
        <taxon>Batrachia</taxon>
        <taxon>Anura</taxon>
        <taxon>Pipoidea</taxon>
        <taxon>Pipidae</taxon>
        <taxon>Xenopodinae</taxon>
        <taxon>Xenopus</taxon>
        <taxon>Xenopus</taxon>
    </lineage>
</organism>
<protein>
    <recommendedName>
        <fullName>Protein FAM50A-B</fullName>
    </recommendedName>
</protein>
<feature type="chain" id="PRO_0000326510" description="Protein FAM50A-B">
    <location>
        <begin position="1"/>
        <end position="343"/>
    </location>
</feature>
<feature type="region of interest" description="Disordered" evidence="3">
    <location>
        <begin position="1"/>
        <end position="25"/>
    </location>
</feature>
<feature type="region of interest" description="Disordered" evidence="3">
    <location>
        <begin position="125"/>
        <end position="181"/>
    </location>
</feature>
<feature type="compositionally biased region" description="Acidic residues" evidence="3">
    <location>
        <begin position="125"/>
        <end position="142"/>
    </location>
</feature>
<feature type="compositionally biased region" description="Basic and acidic residues" evidence="3">
    <location>
        <begin position="172"/>
        <end position="181"/>
    </location>
</feature>
<evidence type="ECO:0000250" key="1">
    <source>
        <dbReference type="UniProtKB" id="Q14320"/>
    </source>
</evidence>
<evidence type="ECO:0000250" key="2">
    <source>
        <dbReference type="UniProtKB" id="Q568K9"/>
    </source>
</evidence>
<evidence type="ECO:0000256" key="3">
    <source>
        <dbReference type="SAM" id="MobiDB-lite"/>
    </source>
</evidence>
<evidence type="ECO:0000305" key="4"/>
<keyword id="KW-0507">mRNA processing</keyword>
<keyword id="KW-0508">mRNA splicing</keyword>
<keyword id="KW-0539">Nucleus</keyword>
<keyword id="KW-1185">Reference proteome</keyword>
<comment type="function">
    <text evidence="2">Probably involved in the regulation of pre-mRNA splicing.</text>
</comment>
<comment type="subcellular location">
    <subcellularLocation>
        <location evidence="1">Nucleus</location>
    </subcellularLocation>
</comment>
<comment type="similarity">
    <text evidence="4">Belongs to the FAM50 family.</text>
</comment>